<evidence type="ECO:0000255" key="1">
    <source>
        <dbReference type="HAMAP-Rule" id="MF_00204"/>
    </source>
</evidence>
<dbReference type="EMBL" id="CP000083">
    <property type="protein sequence ID" value="AAZ27453.1"/>
    <property type="molecule type" value="Genomic_DNA"/>
</dbReference>
<dbReference type="RefSeq" id="WP_011043684.1">
    <property type="nucleotide sequence ID" value="NC_003910.7"/>
</dbReference>
<dbReference type="SMR" id="Q480C7"/>
<dbReference type="STRING" id="167879.CPS_2887"/>
<dbReference type="KEGG" id="cps:CPS_2887"/>
<dbReference type="eggNOG" id="COG0556">
    <property type="taxonomic scope" value="Bacteria"/>
</dbReference>
<dbReference type="HOGENOM" id="CLU_009621_2_1_6"/>
<dbReference type="Proteomes" id="UP000000547">
    <property type="component" value="Chromosome"/>
</dbReference>
<dbReference type="GO" id="GO:0005737">
    <property type="term" value="C:cytoplasm"/>
    <property type="evidence" value="ECO:0007669"/>
    <property type="project" value="UniProtKB-SubCell"/>
</dbReference>
<dbReference type="GO" id="GO:0009380">
    <property type="term" value="C:excinuclease repair complex"/>
    <property type="evidence" value="ECO:0007669"/>
    <property type="project" value="InterPro"/>
</dbReference>
<dbReference type="GO" id="GO:0005524">
    <property type="term" value="F:ATP binding"/>
    <property type="evidence" value="ECO:0007669"/>
    <property type="project" value="UniProtKB-UniRule"/>
</dbReference>
<dbReference type="GO" id="GO:0016887">
    <property type="term" value="F:ATP hydrolysis activity"/>
    <property type="evidence" value="ECO:0007669"/>
    <property type="project" value="InterPro"/>
</dbReference>
<dbReference type="GO" id="GO:0003677">
    <property type="term" value="F:DNA binding"/>
    <property type="evidence" value="ECO:0007669"/>
    <property type="project" value="UniProtKB-UniRule"/>
</dbReference>
<dbReference type="GO" id="GO:0009381">
    <property type="term" value="F:excinuclease ABC activity"/>
    <property type="evidence" value="ECO:0007669"/>
    <property type="project" value="UniProtKB-UniRule"/>
</dbReference>
<dbReference type="GO" id="GO:0006289">
    <property type="term" value="P:nucleotide-excision repair"/>
    <property type="evidence" value="ECO:0007669"/>
    <property type="project" value="UniProtKB-UniRule"/>
</dbReference>
<dbReference type="GO" id="GO:0009432">
    <property type="term" value="P:SOS response"/>
    <property type="evidence" value="ECO:0007669"/>
    <property type="project" value="UniProtKB-UniRule"/>
</dbReference>
<dbReference type="CDD" id="cd17916">
    <property type="entry name" value="DEXHc_UvrB"/>
    <property type="match status" value="1"/>
</dbReference>
<dbReference type="CDD" id="cd18790">
    <property type="entry name" value="SF2_C_UvrB"/>
    <property type="match status" value="1"/>
</dbReference>
<dbReference type="FunFam" id="3.40.50.300:FF:000477">
    <property type="entry name" value="UvrABC system protein B"/>
    <property type="match status" value="1"/>
</dbReference>
<dbReference type="Gene3D" id="6.10.140.240">
    <property type="match status" value="1"/>
</dbReference>
<dbReference type="Gene3D" id="3.40.50.300">
    <property type="entry name" value="P-loop containing nucleotide triphosphate hydrolases"/>
    <property type="match status" value="3"/>
</dbReference>
<dbReference type="Gene3D" id="4.10.860.10">
    <property type="entry name" value="UVR domain"/>
    <property type="match status" value="1"/>
</dbReference>
<dbReference type="HAMAP" id="MF_00204">
    <property type="entry name" value="UvrB"/>
    <property type="match status" value="1"/>
</dbReference>
<dbReference type="InterPro" id="IPR006935">
    <property type="entry name" value="Helicase/UvrB_N"/>
</dbReference>
<dbReference type="InterPro" id="IPR014001">
    <property type="entry name" value="Helicase_ATP-bd"/>
</dbReference>
<dbReference type="InterPro" id="IPR001650">
    <property type="entry name" value="Helicase_C-like"/>
</dbReference>
<dbReference type="InterPro" id="IPR027417">
    <property type="entry name" value="P-loop_NTPase"/>
</dbReference>
<dbReference type="InterPro" id="IPR001943">
    <property type="entry name" value="UVR_dom"/>
</dbReference>
<dbReference type="InterPro" id="IPR036876">
    <property type="entry name" value="UVR_dom_sf"/>
</dbReference>
<dbReference type="InterPro" id="IPR004807">
    <property type="entry name" value="UvrB"/>
</dbReference>
<dbReference type="InterPro" id="IPR041471">
    <property type="entry name" value="UvrB_inter"/>
</dbReference>
<dbReference type="InterPro" id="IPR024759">
    <property type="entry name" value="UvrB_YAD/RRR_dom"/>
</dbReference>
<dbReference type="NCBIfam" id="NF003673">
    <property type="entry name" value="PRK05298.1"/>
    <property type="match status" value="1"/>
</dbReference>
<dbReference type="NCBIfam" id="TIGR00631">
    <property type="entry name" value="uvrb"/>
    <property type="match status" value="1"/>
</dbReference>
<dbReference type="PANTHER" id="PTHR24029">
    <property type="entry name" value="UVRABC SYSTEM PROTEIN B"/>
    <property type="match status" value="1"/>
</dbReference>
<dbReference type="PANTHER" id="PTHR24029:SF0">
    <property type="entry name" value="UVRABC SYSTEM PROTEIN B"/>
    <property type="match status" value="1"/>
</dbReference>
<dbReference type="Pfam" id="PF00271">
    <property type="entry name" value="Helicase_C"/>
    <property type="match status" value="1"/>
</dbReference>
<dbReference type="Pfam" id="PF04851">
    <property type="entry name" value="ResIII"/>
    <property type="match status" value="1"/>
</dbReference>
<dbReference type="Pfam" id="PF02151">
    <property type="entry name" value="UVR"/>
    <property type="match status" value="1"/>
</dbReference>
<dbReference type="Pfam" id="PF12344">
    <property type="entry name" value="UvrB"/>
    <property type="match status" value="1"/>
</dbReference>
<dbReference type="Pfam" id="PF17757">
    <property type="entry name" value="UvrB_inter"/>
    <property type="match status" value="1"/>
</dbReference>
<dbReference type="SMART" id="SM00487">
    <property type="entry name" value="DEXDc"/>
    <property type="match status" value="1"/>
</dbReference>
<dbReference type="SMART" id="SM00490">
    <property type="entry name" value="HELICc"/>
    <property type="match status" value="1"/>
</dbReference>
<dbReference type="SUPFAM" id="SSF46600">
    <property type="entry name" value="C-terminal UvrC-binding domain of UvrB"/>
    <property type="match status" value="1"/>
</dbReference>
<dbReference type="SUPFAM" id="SSF52540">
    <property type="entry name" value="P-loop containing nucleoside triphosphate hydrolases"/>
    <property type="match status" value="2"/>
</dbReference>
<dbReference type="PROSITE" id="PS51192">
    <property type="entry name" value="HELICASE_ATP_BIND_1"/>
    <property type="match status" value="1"/>
</dbReference>
<dbReference type="PROSITE" id="PS51194">
    <property type="entry name" value="HELICASE_CTER"/>
    <property type="match status" value="1"/>
</dbReference>
<dbReference type="PROSITE" id="PS50151">
    <property type="entry name" value="UVR"/>
    <property type="match status" value="1"/>
</dbReference>
<reference key="1">
    <citation type="journal article" date="2005" name="Proc. Natl. Acad. Sci. U.S.A.">
        <title>The psychrophilic lifestyle as revealed by the genome sequence of Colwellia psychrerythraea 34H through genomic and proteomic analyses.</title>
        <authorList>
            <person name="Methe B.A."/>
            <person name="Nelson K.E."/>
            <person name="Deming J.W."/>
            <person name="Momen B."/>
            <person name="Melamud E."/>
            <person name="Zhang X."/>
            <person name="Moult J."/>
            <person name="Madupu R."/>
            <person name="Nelson W.C."/>
            <person name="Dodson R.J."/>
            <person name="Brinkac L.M."/>
            <person name="Daugherty S.C."/>
            <person name="Durkin A.S."/>
            <person name="DeBoy R.T."/>
            <person name="Kolonay J.F."/>
            <person name="Sullivan S.A."/>
            <person name="Zhou L."/>
            <person name="Davidsen T.M."/>
            <person name="Wu M."/>
            <person name="Huston A.L."/>
            <person name="Lewis M."/>
            <person name="Weaver B."/>
            <person name="Weidman J.F."/>
            <person name="Khouri H."/>
            <person name="Utterback T.R."/>
            <person name="Feldblyum T.V."/>
            <person name="Fraser C.M."/>
        </authorList>
    </citation>
    <scope>NUCLEOTIDE SEQUENCE [LARGE SCALE GENOMIC DNA]</scope>
    <source>
        <strain>34H / ATCC BAA-681</strain>
    </source>
</reference>
<gene>
    <name evidence="1" type="primary">uvrB</name>
    <name type="ordered locus">CPS_2887</name>
</gene>
<protein>
    <recommendedName>
        <fullName evidence="1">UvrABC system protein B</fullName>
        <shortName evidence="1">Protein UvrB</shortName>
    </recommendedName>
    <alternativeName>
        <fullName evidence="1">Excinuclease ABC subunit B</fullName>
    </alternativeName>
</protein>
<accession>Q480C7</accession>
<feature type="chain" id="PRO_0000227304" description="UvrABC system protein B">
    <location>
        <begin position="1"/>
        <end position="673"/>
    </location>
</feature>
<feature type="domain" description="Helicase ATP-binding" evidence="1">
    <location>
        <begin position="25"/>
        <end position="413"/>
    </location>
</feature>
<feature type="domain" description="Helicase C-terminal" evidence="1">
    <location>
        <begin position="430"/>
        <end position="583"/>
    </location>
</feature>
<feature type="domain" description="UVR" evidence="1">
    <location>
        <begin position="634"/>
        <end position="669"/>
    </location>
</feature>
<feature type="short sequence motif" description="Beta-hairpin">
    <location>
        <begin position="91"/>
        <end position="114"/>
    </location>
</feature>
<feature type="binding site" evidence="1">
    <location>
        <begin position="38"/>
        <end position="45"/>
    </location>
    <ligand>
        <name>ATP</name>
        <dbReference type="ChEBI" id="CHEBI:30616"/>
    </ligand>
</feature>
<organism>
    <name type="scientific">Colwellia psychrerythraea (strain 34H / ATCC BAA-681)</name>
    <name type="common">Vibrio psychroerythus</name>
    <dbReference type="NCBI Taxonomy" id="167879"/>
    <lineage>
        <taxon>Bacteria</taxon>
        <taxon>Pseudomonadati</taxon>
        <taxon>Pseudomonadota</taxon>
        <taxon>Gammaproteobacteria</taxon>
        <taxon>Alteromonadales</taxon>
        <taxon>Colwelliaceae</taxon>
        <taxon>Colwellia</taxon>
    </lineage>
</organism>
<sequence length="673" mass="76582">MKKLTICSEYTPSGDQPTAIKQLLEGIESGLAHQTLLGVTGSGKTYTIANVIEKLNRPTMMLAPNKTLAAQLYGEMKEFFPDNAVEYFVSYYDYYQPEAYVPTTDTFIEKDASVNEHIEQMRLSATKALLERRDVIIIASVSAIYGLGDPDSYLKMMLHISRGDIINQRDILRRLAELQYTRNDVAFARATYRVRGDVIDIFPAESDRLALRVELFDEEIERISQFDPLTGQVERTLDRVTVYPKTHYATPKEKIIAAVDKIKIELKHRSQQLKDNNKLVEEQRLTQRTQFDIEMMTELGYCSGIENYSRYLSGREEGGAPPTLFDYLPDDGLLIIDESHVTVPQIGAMYKGDRSRKENLVEYGFRLPSALDNRPMKFEEFEAISPQTIYVSATPSKFELEKCGSDIAEQVVRPTGLLDPEIEVRPVETQVDDLLSEINKRLPLDERVLATTLTKRMAEDLTDYLYDHGIKARYLHSDVDTVERVEIIRDFRLGKFDVLVGINLLREGLDMPEVSLVAILDADKEGFLRSDRSLIQTIGRAARNLNGRAILYGDRITGSMRRAIDETERRRVKQHQYNLDNNITPQGVVRRITDVMGVGSYSDAKSLDKVAEANTNYHINQQAEEPLLTTSQIDTKIVELEKLMQGHAQNLEFEQAAAMRDKIAKLRIQQLST</sequence>
<name>UVRB_COLP3</name>
<keyword id="KW-0067">ATP-binding</keyword>
<keyword id="KW-0963">Cytoplasm</keyword>
<keyword id="KW-0227">DNA damage</keyword>
<keyword id="KW-0228">DNA excision</keyword>
<keyword id="KW-0234">DNA repair</keyword>
<keyword id="KW-0267">Excision nuclease</keyword>
<keyword id="KW-0547">Nucleotide-binding</keyword>
<keyword id="KW-0742">SOS response</keyword>
<comment type="function">
    <text evidence="1">The UvrABC repair system catalyzes the recognition and processing of DNA lesions. A damage recognition complex composed of 2 UvrA and 2 UvrB subunits scans DNA for abnormalities. Upon binding of the UvrA(2)B(2) complex to a putative damaged site, the DNA wraps around one UvrB monomer. DNA wrap is dependent on ATP binding by UvrB and probably causes local melting of the DNA helix, facilitating insertion of UvrB beta-hairpin between the DNA strands. Then UvrB probes one DNA strand for the presence of a lesion. If a lesion is found the UvrA subunits dissociate and the UvrB-DNA preincision complex is formed. This complex is subsequently bound by UvrC and the second UvrB is released. If no lesion is found, the DNA wraps around the other UvrB subunit that will check the other stand for damage.</text>
</comment>
<comment type="subunit">
    <text evidence="1">Forms a heterotetramer with UvrA during the search for lesions. Interacts with UvrC in an incision complex.</text>
</comment>
<comment type="subcellular location">
    <subcellularLocation>
        <location evidence="1">Cytoplasm</location>
    </subcellularLocation>
</comment>
<comment type="domain">
    <text evidence="1">The beta-hairpin motif is involved in DNA binding.</text>
</comment>
<comment type="similarity">
    <text evidence="1">Belongs to the UvrB family.</text>
</comment>
<proteinExistence type="inferred from homology"/>